<name>METN_CORGL</name>
<evidence type="ECO:0000255" key="1">
    <source>
        <dbReference type="HAMAP-Rule" id="MF_01719"/>
    </source>
</evidence>
<evidence type="ECO:0000256" key="2">
    <source>
        <dbReference type="SAM" id="MobiDB-lite"/>
    </source>
</evidence>
<organism>
    <name type="scientific">Corynebacterium glutamicum (strain ATCC 13032 / DSM 20300 / JCM 1318 / BCRC 11384 / CCUG 27702 / LMG 3730 / NBRC 12168 / NCIMB 10025 / NRRL B-2784 / 534)</name>
    <dbReference type="NCBI Taxonomy" id="196627"/>
    <lineage>
        <taxon>Bacteria</taxon>
        <taxon>Bacillati</taxon>
        <taxon>Actinomycetota</taxon>
        <taxon>Actinomycetes</taxon>
        <taxon>Mycobacteriales</taxon>
        <taxon>Corynebacteriaceae</taxon>
        <taxon>Corynebacterium</taxon>
    </lineage>
</organism>
<feature type="chain" id="PRO_0000270288" description="Methionine import ATP-binding protein MetN">
    <location>
        <begin position="1"/>
        <end position="360"/>
    </location>
</feature>
<feature type="domain" description="ABC transporter" evidence="1">
    <location>
        <begin position="25"/>
        <end position="265"/>
    </location>
</feature>
<feature type="region of interest" description="Disordered" evidence="2">
    <location>
        <begin position="1"/>
        <end position="22"/>
    </location>
</feature>
<feature type="binding site" evidence="1">
    <location>
        <begin position="62"/>
        <end position="69"/>
    </location>
    <ligand>
        <name>ATP</name>
        <dbReference type="ChEBI" id="CHEBI:30616"/>
    </ligand>
</feature>
<proteinExistence type="inferred from homology"/>
<accession>Q8NSN2</accession>
<accession>Q6M7C8</accession>
<protein>
    <recommendedName>
        <fullName evidence="1">Methionine import ATP-binding protein MetN</fullName>
        <ecNumber evidence="1">7.4.2.11</ecNumber>
    </recommendedName>
</protein>
<reference key="1">
    <citation type="journal article" date="2003" name="Appl. Microbiol. Biotechnol.">
        <title>The Corynebacterium glutamicum genome: features and impacts on biotechnological processes.</title>
        <authorList>
            <person name="Ikeda M."/>
            <person name="Nakagawa S."/>
        </authorList>
    </citation>
    <scope>NUCLEOTIDE SEQUENCE [LARGE SCALE GENOMIC DNA]</scope>
    <source>
        <strain>ATCC 13032 / DSM 20300 / JCM 1318 / BCRC 11384 / CCUG 27702 / LMG 3730 / NBRC 12168 / NCIMB 10025 / NRRL B-2784 / 534</strain>
    </source>
</reference>
<reference key="2">
    <citation type="journal article" date="2003" name="J. Biotechnol.">
        <title>The complete Corynebacterium glutamicum ATCC 13032 genome sequence and its impact on the production of L-aspartate-derived amino acids and vitamins.</title>
        <authorList>
            <person name="Kalinowski J."/>
            <person name="Bathe B."/>
            <person name="Bartels D."/>
            <person name="Bischoff N."/>
            <person name="Bott M."/>
            <person name="Burkovski A."/>
            <person name="Dusch N."/>
            <person name="Eggeling L."/>
            <person name="Eikmanns B.J."/>
            <person name="Gaigalat L."/>
            <person name="Goesmann A."/>
            <person name="Hartmann M."/>
            <person name="Huthmacher K."/>
            <person name="Kraemer R."/>
            <person name="Linke B."/>
            <person name="McHardy A.C."/>
            <person name="Meyer F."/>
            <person name="Moeckel B."/>
            <person name="Pfefferle W."/>
            <person name="Puehler A."/>
            <person name="Rey D.A."/>
            <person name="Rueckert C."/>
            <person name="Rupp O."/>
            <person name="Sahm H."/>
            <person name="Wendisch V.F."/>
            <person name="Wiegraebe I."/>
            <person name="Tauch A."/>
        </authorList>
    </citation>
    <scope>NUCLEOTIDE SEQUENCE [LARGE SCALE GENOMIC DNA]</scope>
    <source>
        <strain>ATCC 13032 / DSM 20300 / JCM 1318 / BCRC 11384 / CCUG 27702 / LMG 3730 / NBRC 12168 / NCIMB 10025 / NRRL B-2784 / 534</strain>
    </source>
</reference>
<gene>
    <name evidence="1" type="primary">metN</name>
    <name type="ordered locus">Cgl0636</name>
    <name type="ordered locus">cg0736</name>
</gene>
<keyword id="KW-0029">Amino-acid transport</keyword>
<keyword id="KW-0067">ATP-binding</keyword>
<keyword id="KW-1003">Cell membrane</keyword>
<keyword id="KW-0472">Membrane</keyword>
<keyword id="KW-0547">Nucleotide-binding</keyword>
<keyword id="KW-1185">Reference proteome</keyword>
<keyword id="KW-1278">Translocase</keyword>
<keyword id="KW-0813">Transport</keyword>
<sequence length="360" mass="39103">MSHTASTPTPEEYSAQQPSTQGTRVEFRGITKVFSNNKSAKTTALDNVTLTVEPGEVIGIIGYSGAGKSTLVRLINGLDSPTSGSLLLNGTDIVGMPESKLRKLRSNIGMIFQQFNLFQSRTAAGNVEYPLEVAKMDKAARKARVQEMLEFVGLGDKGKNYPEQLSGGQKQRVGIARALATNPTLLLADEATSALDPETTHEVLELLRKVNRELGITIVVITHEMEVVRSIADKVAVMESGKVVEYGSVYEVFSNPQTQVAQKFVATALRNTPDQVESEDLLSHEGRLFTIDLTETSGFFAATARAAEQGAFVNIVHGGVTTLQRQSFGKMTVRLTGNTAAIEEFYQTLTKTTTIKEITR</sequence>
<dbReference type="EC" id="7.4.2.11" evidence="1"/>
<dbReference type="EMBL" id="BA000036">
    <property type="protein sequence ID" value="BAB98029.1"/>
    <property type="molecule type" value="Genomic_DNA"/>
</dbReference>
<dbReference type="EMBL" id="BX927149">
    <property type="protein sequence ID" value="CAF19343.1"/>
    <property type="molecule type" value="Genomic_DNA"/>
</dbReference>
<dbReference type="RefSeq" id="NP_599870.1">
    <property type="nucleotide sequence ID" value="NC_003450.3"/>
</dbReference>
<dbReference type="RefSeq" id="WP_003854632.1">
    <property type="nucleotide sequence ID" value="NC_006958.1"/>
</dbReference>
<dbReference type="SMR" id="Q8NSN2"/>
<dbReference type="STRING" id="196627.cg0736"/>
<dbReference type="TCDB" id="3.A.1.24.4">
    <property type="family name" value="the atp-binding cassette (abc) superfamily"/>
</dbReference>
<dbReference type="KEGG" id="cgb:cg0736"/>
<dbReference type="KEGG" id="cgl:Cgl0636"/>
<dbReference type="PATRIC" id="fig|196627.13.peg.622"/>
<dbReference type="eggNOG" id="COG1135">
    <property type="taxonomic scope" value="Bacteria"/>
</dbReference>
<dbReference type="HOGENOM" id="CLU_000604_1_3_11"/>
<dbReference type="OrthoDB" id="4398079at2"/>
<dbReference type="BioCyc" id="CORYNE:G18NG-10198-MONOMER"/>
<dbReference type="Proteomes" id="UP000000582">
    <property type="component" value="Chromosome"/>
</dbReference>
<dbReference type="Proteomes" id="UP000001009">
    <property type="component" value="Chromosome"/>
</dbReference>
<dbReference type="GO" id="GO:0005886">
    <property type="term" value="C:plasma membrane"/>
    <property type="evidence" value="ECO:0007669"/>
    <property type="project" value="UniProtKB-SubCell"/>
</dbReference>
<dbReference type="GO" id="GO:0033232">
    <property type="term" value="F:ABC-type D-methionine transporter activity"/>
    <property type="evidence" value="ECO:0007669"/>
    <property type="project" value="UniProtKB-EC"/>
</dbReference>
<dbReference type="GO" id="GO:0005524">
    <property type="term" value="F:ATP binding"/>
    <property type="evidence" value="ECO:0007669"/>
    <property type="project" value="UniProtKB-KW"/>
</dbReference>
<dbReference type="GO" id="GO:0016887">
    <property type="term" value="F:ATP hydrolysis activity"/>
    <property type="evidence" value="ECO:0007669"/>
    <property type="project" value="InterPro"/>
</dbReference>
<dbReference type="CDD" id="cd03258">
    <property type="entry name" value="ABC_MetN_methionine_transporter"/>
    <property type="match status" value="1"/>
</dbReference>
<dbReference type="FunFam" id="3.40.50.300:FF:000056">
    <property type="entry name" value="Cell division ATP-binding protein FtsE"/>
    <property type="match status" value="1"/>
</dbReference>
<dbReference type="Gene3D" id="3.30.70.260">
    <property type="match status" value="1"/>
</dbReference>
<dbReference type="Gene3D" id="3.40.50.300">
    <property type="entry name" value="P-loop containing nucleotide triphosphate hydrolases"/>
    <property type="match status" value="1"/>
</dbReference>
<dbReference type="InterPro" id="IPR003593">
    <property type="entry name" value="AAA+_ATPase"/>
</dbReference>
<dbReference type="InterPro" id="IPR003439">
    <property type="entry name" value="ABC_transporter-like_ATP-bd"/>
</dbReference>
<dbReference type="InterPro" id="IPR017871">
    <property type="entry name" value="ABC_transporter-like_CS"/>
</dbReference>
<dbReference type="InterPro" id="IPR045865">
    <property type="entry name" value="ACT-like_dom_sf"/>
</dbReference>
<dbReference type="InterPro" id="IPR041701">
    <property type="entry name" value="MetN_ABC"/>
</dbReference>
<dbReference type="InterPro" id="IPR050086">
    <property type="entry name" value="MetN_ABC_transporter-like"/>
</dbReference>
<dbReference type="InterPro" id="IPR018449">
    <property type="entry name" value="NIL_domain"/>
</dbReference>
<dbReference type="InterPro" id="IPR027417">
    <property type="entry name" value="P-loop_NTPase"/>
</dbReference>
<dbReference type="PANTHER" id="PTHR43166">
    <property type="entry name" value="AMINO ACID IMPORT ATP-BINDING PROTEIN"/>
    <property type="match status" value="1"/>
</dbReference>
<dbReference type="PANTHER" id="PTHR43166:SF30">
    <property type="entry name" value="METHIONINE IMPORT ATP-BINDING PROTEIN METN"/>
    <property type="match status" value="1"/>
</dbReference>
<dbReference type="Pfam" id="PF00005">
    <property type="entry name" value="ABC_tran"/>
    <property type="match status" value="1"/>
</dbReference>
<dbReference type="Pfam" id="PF09383">
    <property type="entry name" value="NIL"/>
    <property type="match status" value="1"/>
</dbReference>
<dbReference type="SMART" id="SM00382">
    <property type="entry name" value="AAA"/>
    <property type="match status" value="1"/>
</dbReference>
<dbReference type="SMART" id="SM00930">
    <property type="entry name" value="NIL"/>
    <property type="match status" value="1"/>
</dbReference>
<dbReference type="SUPFAM" id="SSF55021">
    <property type="entry name" value="ACT-like"/>
    <property type="match status" value="1"/>
</dbReference>
<dbReference type="SUPFAM" id="SSF52540">
    <property type="entry name" value="P-loop containing nucleoside triphosphate hydrolases"/>
    <property type="match status" value="1"/>
</dbReference>
<dbReference type="PROSITE" id="PS00211">
    <property type="entry name" value="ABC_TRANSPORTER_1"/>
    <property type="match status" value="1"/>
</dbReference>
<dbReference type="PROSITE" id="PS50893">
    <property type="entry name" value="ABC_TRANSPORTER_2"/>
    <property type="match status" value="1"/>
</dbReference>
<dbReference type="PROSITE" id="PS51264">
    <property type="entry name" value="METN"/>
    <property type="match status" value="1"/>
</dbReference>
<comment type="function">
    <text evidence="1">Part of the ABC transporter complex MetNIQ involved in methionine import. Responsible for energy coupling to the transport system.</text>
</comment>
<comment type="catalytic activity">
    <reaction evidence="1">
        <text>L-methionine(out) + ATP + H2O = L-methionine(in) + ADP + phosphate + H(+)</text>
        <dbReference type="Rhea" id="RHEA:29779"/>
        <dbReference type="ChEBI" id="CHEBI:15377"/>
        <dbReference type="ChEBI" id="CHEBI:15378"/>
        <dbReference type="ChEBI" id="CHEBI:30616"/>
        <dbReference type="ChEBI" id="CHEBI:43474"/>
        <dbReference type="ChEBI" id="CHEBI:57844"/>
        <dbReference type="ChEBI" id="CHEBI:456216"/>
        <dbReference type="EC" id="7.4.2.11"/>
    </reaction>
</comment>
<comment type="catalytic activity">
    <reaction evidence="1">
        <text>D-methionine(out) + ATP + H2O = D-methionine(in) + ADP + phosphate + H(+)</text>
        <dbReference type="Rhea" id="RHEA:29767"/>
        <dbReference type="ChEBI" id="CHEBI:15377"/>
        <dbReference type="ChEBI" id="CHEBI:15378"/>
        <dbReference type="ChEBI" id="CHEBI:30616"/>
        <dbReference type="ChEBI" id="CHEBI:43474"/>
        <dbReference type="ChEBI" id="CHEBI:57932"/>
        <dbReference type="ChEBI" id="CHEBI:456216"/>
        <dbReference type="EC" id="7.4.2.11"/>
    </reaction>
</comment>
<comment type="subunit">
    <text evidence="1">The complex is composed of two ATP-binding proteins (MetN), two transmembrane proteins (MetI) and a solute-binding protein (MetQ).</text>
</comment>
<comment type="subcellular location">
    <subcellularLocation>
        <location evidence="1">Cell membrane</location>
        <topology evidence="1">Peripheral membrane protein</topology>
    </subcellularLocation>
</comment>
<comment type="similarity">
    <text evidence="1">Belongs to the ABC transporter superfamily. Methionine importer (TC 3.A.1.24) family.</text>
</comment>